<reference key="1">
    <citation type="journal article" date="2006" name="Genome Res.">
        <title>Skewed genomic variability in strains of the toxigenic bacterial pathogen, Clostridium perfringens.</title>
        <authorList>
            <person name="Myers G.S.A."/>
            <person name="Rasko D.A."/>
            <person name="Cheung J.K."/>
            <person name="Ravel J."/>
            <person name="Seshadri R."/>
            <person name="DeBoy R.T."/>
            <person name="Ren Q."/>
            <person name="Varga J."/>
            <person name="Awad M.M."/>
            <person name="Brinkac L.M."/>
            <person name="Daugherty S.C."/>
            <person name="Haft D.H."/>
            <person name="Dodson R.J."/>
            <person name="Madupu R."/>
            <person name="Nelson W.C."/>
            <person name="Rosovitz M.J."/>
            <person name="Sullivan S.A."/>
            <person name="Khouri H."/>
            <person name="Dimitrov G.I."/>
            <person name="Watkins K.L."/>
            <person name="Mulligan S."/>
            <person name="Benton J."/>
            <person name="Radune D."/>
            <person name="Fisher D.J."/>
            <person name="Atkins H.S."/>
            <person name="Hiscox T."/>
            <person name="Jost B.H."/>
            <person name="Billington S.J."/>
            <person name="Songer J.G."/>
            <person name="McClane B.A."/>
            <person name="Titball R.W."/>
            <person name="Rood J.I."/>
            <person name="Melville S.B."/>
            <person name="Paulsen I.T."/>
        </authorList>
    </citation>
    <scope>NUCLEOTIDE SEQUENCE [LARGE SCALE GENOMIC DNA]</scope>
    <source>
        <strain>ATCC 13124 / DSM 756 / JCM 1290 / NCIMB 6125 / NCTC 8237 / S 107 / Type A</strain>
    </source>
</reference>
<gene>
    <name evidence="1" type="primary">rplM</name>
    <name type="ordered locus">CPF_2679</name>
</gene>
<comment type="function">
    <text evidence="1">This protein is one of the early assembly proteins of the 50S ribosomal subunit, although it is not seen to bind rRNA by itself. It is important during the early stages of 50S assembly.</text>
</comment>
<comment type="subunit">
    <text evidence="1">Part of the 50S ribosomal subunit.</text>
</comment>
<comment type="similarity">
    <text evidence="1">Belongs to the universal ribosomal protein uL13 family.</text>
</comment>
<keyword id="KW-0687">Ribonucleoprotein</keyword>
<keyword id="KW-0689">Ribosomal protein</keyword>
<proteinExistence type="inferred from homology"/>
<feature type="chain" id="PRO_0000261714" description="Large ribosomal subunit protein uL13">
    <location>
        <begin position="1"/>
        <end position="144"/>
    </location>
</feature>
<accession>Q0TMT1</accession>
<protein>
    <recommendedName>
        <fullName evidence="1">Large ribosomal subunit protein uL13</fullName>
    </recommendedName>
    <alternativeName>
        <fullName evidence="2">50S ribosomal protein L13</fullName>
    </alternativeName>
</protein>
<evidence type="ECO:0000255" key="1">
    <source>
        <dbReference type="HAMAP-Rule" id="MF_01366"/>
    </source>
</evidence>
<evidence type="ECO:0000305" key="2"/>
<sequence>MKSYIAKAQEVERKWYVVDAAGKPLGRVASQVASILRGKNKPTFTPNVDCGDFVIVINAEKVVLTGKKLDQKMLRKHSLYAGGLKETPYREVLEKKPEFAFEEAVRRMLPTGVLGRKMLKKLNVYRGAEHDHAAQKPEVLELRY</sequence>
<dbReference type="EMBL" id="CP000246">
    <property type="protein sequence ID" value="ABG82508.1"/>
    <property type="molecule type" value="Genomic_DNA"/>
</dbReference>
<dbReference type="RefSeq" id="WP_003454462.1">
    <property type="nucleotide sequence ID" value="NC_008261.1"/>
</dbReference>
<dbReference type="SMR" id="Q0TMT1"/>
<dbReference type="STRING" id="195103.CPF_2679"/>
<dbReference type="PaxDb" id="195103-CPF_2679"/>
<dbReference type="GeneID" id="93001044"/>
<dbReference type="KEGG" id="cpf:CPF_2679"/>
<dbReference type="eggNOG" id="COG0102">
    <property type="taxonomic scope" value="Bacteria"/>
</dbReference>
<dbReference type="HOGENOM" id="CLU_082184_2_2_9"/>
<dbReference type="Proteomes" id="UP000001823">
    <property type="component" value="Chromosome"/>
</dbReference>
<dbReference type="GO" id="GO:0022625">
    <property type="term" value="C:cytosolic large ribosomal subunit"/>
    <property type="evidence" value="ECO:0007669"/>
    <property type="project" value="TreeGrafter"/>
</dbReference>
<dbReference type="GO" id="GO:0003729">
    <property type="term" value="F:mRNA binding"/>
    <property type="evidence" value="ECO:0007669"/>
    <property type="project" value="TreeGrafter"/>
</dbReference>
<dbReference type="GO" id="GO:0003735">
    <property type="term" value="F:structural constituent of ribosome"/>
    <property type="evidence" value="ECO:0007669"/>
    <property type="project" value="InterPro"/>
</dbReference>
<dbReference type="GO" id="GO:0017148">
    <property type="term" value="P:negative regulation of translation"/>
    <property type="evidence" value="ECO:0007669"/>
    <property type="project" value="TreeGrafter"/>
</dbReference>
<dbReference type="GO" id="GO:0006412">
    <property type="term" value="P:translation"/>
    <property type="evidence" value="ECO:0007669"/>
    <property type="project" value="UniProtKB-UniRule"/>
</dbReference>
<dbReference type="CDD" id="cd00392">
    <property type="entry name" value="Ribosomal_L13"/>
    <property type="match status" value="1"/>
</dbReference>
<dbReference type="FunFam" id="3.90.1180.10:FF:000001">
    <property type="entry name" value="50S ribosomal protein L13"/>
    <property type="match status" value="1"/>
</dbReference>
<dbReference type="Gene3D" id="3.90.1180.10">
    <property type="entry name" value="Ribosomal protein L13"/>
    <property type="match status" value="1"/>
</dbReference>
<dbReference type="HAMAP" id="MF_01366">
    <property type="entry name" value="Ribosomal_uL13"/>
    <property type="match status" value="1"/>
</dbReference>
<dbReference type="InterPro" id="IPR005822">
    <property type="entry name" value="Ribosomal_uL13"/>
</dbReference>
<dbReference type="InterPro" id="IPR005823">
    <property type="entry name" value="Ribosomal_uL13_bac-type"/>
</dbReference>
<dbReference type="InterPro" id="IPR023563">
    <property type="entry name" value="Ribosomal_uL13_CS"/>
</dbReference>
<dbReference type="InterPro" id="IPR036899">
    <property type="entry name" value="Ribosomal_uL13_sf"/>
</dbReference>
<dbReference type="NCBIfam" id="TIGR01066">
    <property type="entry name" value="rplM_bact"/>
    <property type="match status" value="1"/>
</dbReference>
<dbReference type="PANTHER" id="PTHR11545:SF2">
    <property type="entry name" value="LARGE RIBOSOMAL SUBUNIT PROTEIN UL13M"/>
    <property type="match status" value="1"/>
</dbReference>
<dbReference type="PANTHER" id="PTHR11545">
    <property type="entry name" value="RIBOSOMAL PROTEIN L13"/>
    <property type="match status" value="1"/>
</dbReference>
<dbReference type="Pfam" id="PF00572">
    <property type="entry name" value="Ribosomal_L13"/>
    <property type="match status" value="1"/>
</dbReference>
<dbReference type="PIRSF" id="PIRSF002181">
    <property type="entry name" value="Ribosomal_L13"/>
    <property type="match status" value="1"/>
</dbReference>
<dbReference type="SUPFAM" id="SSF52161">
    <property type="entry name" value="Ribosomal protein L13"/>
    <property type="match status" value="1"/>
</dbReference>
<dbReference type="PROSITE" id="PS00783">
    <property type="entry name" value="RIBOSOMAL_L13"/>
    <property type="match status" value="1"/>
</dbReference>
<name>RL13_CLOP1</name>
<organism>
    <name type="scientific">Clostridium perfringens (strain ATCC 13124 / DSM 756 / JCM 1290 / NCIMB 6125 / NCTC 8237 / Type A)</name>
    <dbReference type="NCBI Taxonomy" id="195103"/>
    <lineage>
        <taxon>Bacteria</taxon>
        <taxon>Bacillati</taxon>
        <taxon>Bacillota</taxon>
        <taxon>Clostridia</taxon>
        <taxon>Eubacteriales</taxon>
        <taxon>Clostridiaceae</taxon>
        <taxon>Clostridium</taxon>
    </lineage>
</organism>